<protein>
    <recommendedName>
        <fullName evidence="2">Translation initiation factor IF-2</fullName>
    </recommendedName>
</protein>
<dbReference type="EMBL" id="AP009351">
    <property type="protein sequence ID" value="BAF67450.1"/>
    <property type="molecule type" value="Genomic_DNA"/>
</dbReference>
<dbReference type="RefSeq" id="WP_000043634.1">
    <property type="nucleotide sequence ID" value="NZ_JBBIAE010000001.1"/>
</dbReference>
<dbReference type="SMR" id="A6QGG8"/>
<dbReference type="KEGG" id="sae:NWMN_1178"/>
<dbReference type="HOGENOM" id="CLU_006301_5_1_9"/>
<dbReference type="Proteomes" id="UP000006386">
    <property type="component" value="Chromosome"/>
</dbReference>
<dbReference type="GO" id="GO:0005829">
    <property type="term" value="C:cytosol"/>
    <property type="evidence" value="ECO:0007669"/>
    <property type="project" value="TreeGrafter"/>
</dbReference>
<dbReference type="GO" id="GO:0005525">
    <property type="term" value="F:GTP binding"/>
    <property type="evidence" value="ECO:0007669"/>
    <property type="project" value="UniProtKB-KW"/>
</dbReference>
<dbReference type="GO" id="GO:0003924">
    <property type="term" value="F:GTPase activity"/>
    <property type="evidence" value="ECO:0007669"/>
    <property type="project" value="UniProtKB-UniRule"/>
</dbReference>
<dbReference type="GO" id="GO:0003743">
    <property type="term" value="F:translation initiation factor activity"/>
    <property type="evidence" value="ECO:0007669"/>
    <property type="project" value="UniProtKB-UniRule"/>
</dbReference>
<dbReference type="CDD" id="cd01887">
    <property type="entry name" value="IF2_eIF5B"/>
    <property type="match status" value="1"/>
</dbReference>
<dbReference type="CDD" id="cd03702">
    <property type="entry name" value="IF2_mtIF2_II"/>
    <property type="match status" value="1"/>
</dbReference>
<dbReference type="CDD" id="cd03692">
    <property type="entry name" value="mtIF2_IVc"/>
    <property type="match status" value="1"/>
</dbReference>
<dbReference type="FunFam" id="1.10.10.2480:FF:000002">
    <property type="entry name" value="Translation initiation factor IF-2"/>
    <property type="match status" value="1"/>
</dbReference>
<dbReference type="FunFam" id="2.40.30.10:FF:000007">
    <property type="entry name" value="Translation initiation factor IF-2"/>
    <property type="match status" value="1"/>
</dbReference>
<dbReference type="FunFam" id="2.40.30.10:FF:000008">
    <property type="entry name" value="Translation initiation factor IF-2"/>
    <property type="match status" value="1"/>
</dbReference>
<dbReference type="FunFam" id="3.40.50.10050:FF:000001">
    <property type="entry name" value="Translation initiation factor IF-2"/>
    <property type="match status" value="1"/>
</dbReference>
<dbReference type="FunFam" id="3.40.50.300:FF:000019">
    <property type="entry name" value="Translation initiation factor IF-2"/>
    <property type="match status" value="1"/>
</dbReference>
<dbReference type="Gene3D" id="1.10.10.2480">
    <property type="match status" value="1"/>
</dbReference>
<dbReference type="Gene3D" id="3.40.50.300">
    <property type="entry name" value="P-loop containing nucleotide triphosphate hydrolases"/>
    <property type="match status" value="1"/>
</dbReference>
<dbReference type="Gene3D" id="2.40.30.10">
    <property type="entry name" value="Translation factors"/>
    <property type="match status" value="2"/>
</dbReference>
<dbReference type="Gene3D" id="3.40.50.10050">
    <property type="entry name" value="Translation initiation factor IF- 2, domain 3"/>
    <property type="match status" value="1"/>
</dbReference>
<dbReference type="HAMAP" id="MF_00100_B">
    <property type="entry name" value="IF_2_B"/>
    <property type="match status" value="1"/>
</dbReference>
<dbReference type="InterPro" id="IPR053905">
    <property type="entry name" value="EF-G-like_DII"/>
</dbReference>
<dbReference type="InterPro" id="IPR044145">
    <property type="entry name" value="IF2_II"/>
</dbReference>
<dbReference type="InterPro" id="IPR006847">
    <property type="entry name" value="IF2_N"/>
</dbReference>
<dbReference type="InterPro" id="IPR027417">
    <property type="entry name" value="P-loop_NTPase"/>
</dbReference>
<dbReference type="InterPro" id="IPR005225">
    <property type="entry name" value="Small_GTP-bd"/>
</dbReference>
<dbReference type="InterPro" id="IPR000795">
    <property type="entry name" value="T_Tr_GTP-bd_dom"/>
</dbReference>
<dbReference type="InterPro" id="IPR000178">
    <property type="entry name" value="TF_IF2_bacterial-like"/>
</dbReference>
<dbReference type="InterPro" id="IPR015760">
    <property type="entry name" value="TIF_IF2"/>
</dbReference>
<dbReference type="InterPro" id="IPR023115">
    <property type="entry name" value="TIF_IF2_dom3"/>
</dbReference>
<dbReference type="InterPro" id="IPR036925">
    <property type="entry name" value="TIF_IF2_dom3_sf"/>
</dbReference>
<dbReference type="InterPro" id="IPR009000">
    <property type="entry name" value="Transl_B-barrel_sf"/>
</dbReference>
<dbReference type="NCBIfam" id="TIGR00487">
    <property type="entry name" value="IF-2"/>
    <property type="match status" value="1"/>
</dbReference>
<dbReference type="NCBIfam" id="TIGR00231">
    <property type="entry name" value="small_GTP"/>
    <property type="match status" value="1"/>
</dbReference>
<dbReference type="PANTHER" id="PTHR43381:SF5">
    <property type="entry name" value="TR-TYPE G DOMAIN-CONTAINING PROTEIN"/>
    <property type="match status" value="1"/>
</dbReference>
<dbReference type="PANTHER" id="PTHR43381">
    <property type="entry name" value="TRANSLATION INITIATION FACTOR IF-2-RELATED"/>
    <property type="match status" value="1"/>
</dbReference>
<dbReference type="Pfam" id="PF22042">
    <property type="entry name" value="EF-G_D2"/>
    <property type="match status" value="1"/>
</dbReference>
<dbReference type="Pfam" id="PF00009">
    <property type="entry name" value="GTP_EFTU"/>
    <property type="match status" value="1"/>
</dbReference>
<dbReference type="Pfam" id="PF11987">
    <property type="entry name" value="IF-2"/>
    <property type="match status" value="1"/>
</dbReference>
<dbReference type="Pfam" id="PF04760">
    <property type="entry name" value="IF2_N"/>
    <property type="match status" value="2"/>
</dbReference>
<dbReference type="SUPFAM" id="SSF52156">
    <property type="entry name" value="Initiation factor IF2/eIF5b, domain 3"/>
    <property type="match status" value="1"/>
</dbReference>
<dbReference type="SUPFAM" id="SSF52540">
    <property type="entry name" value="P-loop containing nucleoside triphosphate hydrolases"/>
    <property type="match status" value="1"/>
</dbReference>
<dbReference type="SUPFAM" id="SSF50447">
    <property type="entry name" value="Translation proteins"/>
    <property type="match status" value="2"/>
</dbReference>
<dbReference type="PROSITE" id="PS51722">
    <property type="entry name" value="G_TR_2"/>
    <property type="match status" value="1"/>
</dbReference>
<dbReference type="PROSITE" id="PS01176">
    <property type="entry name" value="IF2"/>
    <property type="match status" value="1"/>
</dbReference>
<name>IF2_STAAE</name>
<organism>
    <name type="scientific">Staphylococcus aureus (strain Newman)</name>
    <dbReference type="NCBI Taxonomy" id="426430"/>
    <lineage>
        <taxon>Bacteria</taxon>
        <taxon>Bacillati</taxon>
        <taxon>Bacillota</taxon>
        <taxon>Bacilli</taxon>
        <taxon>Bacillales</taxon>
        <taxon>Staphylococcaceae</taxon>
        <taxon>Staphylococcus</taxon>
    </lineage>
</organism>
<sequence>MSKQRIYEYAKELNLKSKEIIDELKSMNIEVSNHMQALEDDQIKALDKKFKKEQKNDNKQSTQNNHQKSNNQNQNKGQQKDNKKNQQQNNKGNKGNKKNNRNNKKNNKNNKPQNQPAAPKEIPSKVTYQEGITVGEFADKLNVESSEIIKKLFLLGIVANINQSLNQETIELIADDYGVEVEEEVVINEEDLSIYFEDEKDDPEAIERPAVVTIMGHVDHGKTTLLDSIRHTKVTAGEAGGITQHIGAYQIENDGKKITFLDTPGHAAFTTMRARGAQVTDITILVVAADDGVMPQTIEAINHAKEAEVPIIVAVNKIDKPTSNPDRVMQELTEYGLIPEDWGGETIFVPLSALSGDGIDDLLEMIGLVAEVQELKANPKNRAVGTVIEAELDKSRGPSASLLVQNGTLNVGDAIVVGNTYGRIRAMVNDLGQRIKTAGPSTPVEITGINDVPQAGDRFVVFSDEKQARRIGESRHEASIIQQRQESKNVSLDNLFEQMKQGEMKDLNVIIKGDVQGSVEALAASLMKIDVEGVNVRIIHTAVGAINESDVTLANASNGIIIGFNVRPDSGAKRAAEAENVDMRLHRVIYNVIEEIESAMKGLLDPEFEEQVIGQAEVRQTFKVSKVGTIAGCYVTEGKITRNAGVRIIRDGIVQYEGELDTLKRFKDDAKEVAKGYECGITIENYNDLKEGDVIEAFEMVEIKR</sequence>
<reference key="1">
    <citation type="journal article" date="2008" name="J. Bacteriol.">
        <title>Genome sequence of Staphylococcus aureus strain Newman and comparative analysis of staphylococcal genomes: polymorphism and evolution of two major pathogenicity islands.</title>
        <authorList>
            <person name="Baba T."/>
            <person name="Bae T."/>
            <person name="Schneewind O."/>
            <person name="Takeuchi F."/>
            <person name="Hiramatsu K."/>
        </authorList>
    </citation>
    <scope>NUCLEOTIDE SEQUENCE [LARGE SCALE GENOMIC DNA]</scope>
    <source>
        <strain>Newman</strain>
    </source>
</reference>
<keyword id="KW-0963">Cytoplasm</keyword>
<keyword id="KW-0342">GTP-binding</keyword>
<keyword id="KW-0396">Initiation factor</keyword>
<keyword id="KW-0547">Nucleotide-binding</keyword>
<keyword id="KW-0648">Protein biosynthesis</keyword>
<proteinExistence type="inferred from homology"/>
<feature type="chain" id="PRO_1000071292" description="Translation initiation factor IF-2">
    <location>
        <begin position="1"/>
        <end position="705"/>
    </location>
</feature>
<feature type="domain" description="tr-type G">
    <location>
        <begin position="207"/>
        <end position="376"/>
    </location>
</feature>
<feature type="region of interest" description="Disordered" evidence="3">
    <location>
        <begin position="40"/>
        <end position="124"/>
    </location>
</feature>
<feature type="region of interest" description="G1" evidence="1">
    <location>
        <begin position="216"/>
        <end position="223"/>
    </location>
</feature>
<feature type="region of interest" description="G2" evidence="1">
    <location>
        <begin position="241"/>
        <end position="245"/>
    </location>
</feature>
<feature type="region of interest" description="G3" evidence="1">
    <location>
        <begin position="262"/>
        <end position="265"/>
    </location>
</feature>
<feature type="region of interest" description="G4" evidence="1">
    <location>
        <begin position="316"/>
        <end position="319"/>
    </location>
</feature>
<feature type="region of interest" description="G5" evidence="1">
    <location>
        <begin position="352"/>
        <end position="354"/>
    </location>
</feature>
<feature type="compositionally biased region" description="Basic and acidic residues" evidence="3">
    <location>
        <begin position="41"/>
        <end position="58"/>
    </location>
</feature>
<feature type="compositionally biased region" description="Low complexity" evidence="3">
    <location>
        <begin position="59"/>
        <end position="77"/>
    </location>
</feature>
<feature type="compositionally biased region" description="Basic residues" evidence="3">
    <location>
        <begin position="94"/>
        <end position="108"/>
    </location>
</feature>
<feature type="binding site" evidence="2">
    <location>
        <begin position="216"/>
        <end position="223"/>
    </location>
    <ligand>
        <name>GTP</name>
        <dbReference type="ChEBI" id="CHEBI:37565"/>
    </ligand>
</feature>
<feature type="binding site" evidence="2">
    <location>
        <begin position="262"/>
        <end position="266"/>
    </location>
    <ligand>
        <name>GTP</name>
        <dbReference type="ChEBI" id="CHEBI:37565"/>
    </ligand>
</feature>
<feature type="binding site" evidence="2">
    <location>
        <begin position="316"/>
        <end position="319"/>
    </location>
    <ligand>
        <name>GTP</name>
        <dbReference type="ChEBI" id="CHEBI:37565"/>
    </ligand>
</feature>
<comment type="function">
    <text evidence="2">One of the essential components for the initiation of protein synthesis. Protects formylmethionyl-tRNA from spontaneous hydrolysis and promotes its binding to the 30S ribosomal subunits. Also involved in the hydrolysis of GTP during the formation of the 70S ribosomal complex.</text>
</comment>
<comment type="subcellular location">
    <subcellularLocation>
        <location evidence="2">Cytoplasm</location>
    </subcellularLocation>
</comment>
<comment type="similarity">
    <text evidence="2">Belongs to the TRAFAC class translation factor GTPase superfamily. Classic translation factor GTPase family. IF-2 subfamily.</text>
</comment>
<accession>A6QGG8</accession>
<gene>
    <name evidence="2" type="primary">infB</name>
    <name type="ordered locus">NWMN_1178</name>
</gene>
<evidence type="ECO:0000250" key="1"/>
<evidence type="ECO:0000255" key="2">
    <source>
        <dbReference type="HAMAP-Rule" id="MF_00100"/>
    </source>
</evidence>
<evidence type="ECO:0000256" key="3">
    <source>
        <dbReference type="SAM" id="MobiDB-lite"/>
    </source>
</evidence>